<proteinExistence type="inferred from homology"/>
<gene>
    <name evidence="1" type="primary">trmD</name>
    <name type="ordered locus">ZMO1078</name>
</gene>
<feature type="chain" id="PRO_0000060508" description="tRNA (guanine-N(1)-)-methyltransferase">
    <location>
        <begin position="1"/>
        <end position="249"/>
    </location>
</feature>
<feature type="binding site" evidence="1">
    <location>
        <position position="116"/>
    </location>
    <ligand>
        <name>S-adenosyl-L-methionine</name>
        <dbReference type="ChEBI" id="CHEBI:59789"/>
    </ligand>
</feature>
<feature type="binding site" evidence="1">
    <location>
        <begin position="136"/>
        <end position="141"/>
    </location>
    <ligand>
        <name>S-adenosyl-L-methionine</name>
        <dbReference type="ChEBI" id="CHEBI:59789"/>
    </ligand>
</feature>
<name>TRMD_ZYMMO</name>
<dbReference type="EC" id="2.1.1.228" evidence="1"/>
<dbReference type="EMBL" id="AE008692">
    <property type="protein sequence ID" value="AAV89702.1"/>
    <property type="molecule type" value="Genomic_DNA"/>
</dbReference>
<dbReference type="RefSeq" id="WP_011240913.1">
    <property type="nucleotide sequence ID" value="NZ_CP035711.1"/>
</dbReference>
<dbReference type="SMR" id="Q5NNK8"/>
<dbReference type="STRING" id="264203.ZMO1078"/>
<dbReference type="KEGG" id="zmo:ZMO1078"/>
<dbReference type="eggNOG" id="COG0336">
    <property type="taxonomic scope" value="Bacteria"/>
</dbReference>
<dbReference type="HOGENOM" id="CLU_047363_0_1_5"/>
<dbReference type="Proteomes" id="UP000001173">
    <property type="component" value="Chromosome"/>
</dbReference>
<dbReference type="GO" id="GO:0005829">
    <property type="term" value="C:cytosol"/>
    <property type="evidence" value="ECO:0007669"/>
    <property type="project" value="TreeGrafter"/>
</dbReference>
<dbReference type="GO" id="GO:0052906">
    <property type="term" value="F:tRNA (guanine(37)-N1)-methyltransferase activity"/>
    <property type="evidence" value="ECO:0007669"/>
    <property type="project" value="UniProtKB-UniRule"/>
</dbReference>
<dbReference type="GO" id="GO:0002939">
    <property type="term" value="P:tRNA N1-guanine methylation"/>
    <property type="evidence" value="ECO:0007669"/>
    <property type="project" value="TreeGrafter"/>
</dbReference>
<dbReference type="CDD" id="cd18080">
    <property type="entry name" value="TrmD-like"/>
    <property type="match status" value="1"/>
</dbReference>
<dbReference type="Gene3D" id="3.40.1280.10">
    <property type="match status" value="1"/>
</dbReference>
<dbReference type="Gene3D" id="1.10.1270.20">
    <property type="entry name" value="tRNA(m1g37)methyltransferase, domain 2"/>
    <property type="match status" value="1"/>
</dbReference>
<dbReference type="HAMAP" id="MF_00605">
    <property type="entry name" value="TrmD"/>
    <property type="match status" value="1"/>
</dbReference>
<dbReference type="InterPro" id="IPR029028">
    <property type="entry name" value="Alpha/beta_knot_MTases"/>
</dbReference>
<dbReference type="InterPro" id="IPR023148">
    <property type="entry name" value="tRNA_m1G_MeTrfase_C_sf"/>
</dbReference>
<dbReference type="InterPro" id="IPR002649">
    <property type="entry name" value="tRNA_m1G_MeTrfase_TrmD"/>
</dbReference>
<dbReference type="InterPro" id="IPR029026">
    <property type="entry name" value="tRNA_m1G_MTases_N"/>
</dbReference>
<dbReference type="InterPro" id="IPR016009">
    <property type="entry name" value="tRNA_MeTrfase_TRMD/TRM10"/>
</dbReference>
<dbReference type="NCBIfam" id="NF000648">
    <property type="entry name" value="PRK00026.1"/>
    <property type="match status" value="1"/>
</dbReference>
<dbReference type="NCBIfam" id="TIGR00088">
    <property type="entry name" value="trmD"/>
    <property type="match status" value="1"/>
</dbReference>
<dbReference type="PANTHER" id="PTHR46417">
    <property type="entry name" value="TRNA (GUANINE-N(1)-)-METHYLTRANSFERASE"/>
    <property type="match status" value="1"/>
</dbReference>
<dbReference type="PANTHER" id="PTHR46417:SF1">
    <property type="entry name" value="TRNA (GUANINE-N(1)-)-METHYLTRANSFERASE"/>
    <property type="match status" value="1"/>
</dbReference>
<dbReference type="Pfam" id="PF01746">
    <property type="entry name" value="tRNA_m1G_MT"/>
    <property type="match status" value="1"/>
</dbReference>
<dbReference type="PIRSF" id="PIRSF000386">
    <property type="entry name" value="tRNA_mtase"/>
    <property type="match status" value="1"/>
</dbReference>
<dbReference type="SUPFAM" id="SSF75217">
    <property type="entry name" value="alpha/beta knot"/>
    <property type="match status" value="1"/>
</dbReference>
<sequence length="249" mass="27821">MNKPFSASILTLYPEMFPGPLGHSLAGRALENNIWSLETVAIRDFANDRHHTVDDTPSGGGAGMVMRADILARALDHSCEKHPDLPVLAMTPRGYPLTQSRVRQLSEGAGAIIICGRFEGMDERLFEKRAIEPVSIGDYILSGGEMAALTLLDACIRLIPGVMGKITSGEDESFETGLLEYPQYTRPVEWEGLSIPEVLRSGNHAHIKAWRQAMAERDTRLRRPDLWERYRSVQASRPLARNKKDRNEK</sequence>
<comment type="function">
    <text evidence="1">Specifically methylates guanosine-37 in various tRNAs.</text>
</comment>
<comment type="catalytic activity">
    <reaction evidence="1">
        <text>guanosine(37) in tRNA + S-adenosyl-L-methionine = N(1)-methylguanosine(37) in tRNA + S-adenosyl-L-homocysteine + H(+)</text>
        <dbReference type="Rhea" id="RHEA:36899"/>
        <dbReference type="Rhea" id="RHEA-COMP:10145"/>
        <dbReference type="Rhea" id="RHEA-COMP:10147"/>
        <dbReference type="ChEBI" id="CHEBI:15378"/>
        <dbReference type="ChEBI" id="CHEBI:57856"/>
        <dbReference type="ChEBI" id="CHEBI:59789"/>
        <dbReference type="ChEBI" id="CHEBI:73542"/>
        <dbReference type="ChEBI" id="CHEBI:74269"/>
        <dbReference type="EC" id="2.1.1.228"/>
    </reaction>
</comment>
<comment type="subunit">
    <text evidence="1">Homodimer.</text>
</comment>
<comment type="subcellular location">
    <subcellularLocation>
        <location evidence="1">Cytoplasm</location>
    </subcellularLocation>
</comment>
<comment type="similarity">
    <text evidence="1">Belongs to the RNA methyltransferase TrmD family.</text>
</comment>
<accession>Q5NNK8</accession>
<reference key="1">
    <citation type="journal article" date="2005" name="Nat. Biotechnol.">
        <title>The genome sequence of the ethanologenic bacterium Zymomonas mobilis ZM4.</title>
        <authorList>
            <person name="Seo J.-S."/>
            <person name="Chong H."/>
            <person name="Park H.S."/>
            <person name="Yoon K.-O."/>
            <person name="Jung C."/>
            <person name="Kim J.J."/>
            <person name="Hong J.H."/>
            <person name="Kim H."/>
            <person name="Kim J.-H."/>
            <person name="Kil J.-I."/>
            <person name="Park C.J."/>
            <person name="Oh H.-M."/>
            <person name="Lee J.-S."/>
            <person name="Jin S.-J."/>
            <person name="Um H.-W."/>
            <person name="Lee H.-J."/>
            <person name="Oh S.-J."/>
            <person name="Kim J.Y."/>
            <person name="Kang H.L."/>
            <person name="Lee S.Y."/>
            <person name="Lee K.J."/>
            <person name="Kang H.S."/>
        </authorList>
    </citation>
    <scope>NUCLEOTIDE SEQUENCE [LARGE SCALE GENOMIC DNA]</scope>
    <source>
        <strain>ATCC 31821 / ZM4 / CP4</strain>
    </source>
</reference>
<protein>
    <recommendedName>
        <fullName evidence="1">tRNA (guanine-N(1)-)-methyltransferase</fullName>
        <ecNumber evidence="1">2.1.1.228</ecNumber>
    </recommendedName>
    <alternativeName>
        <fullName evidence="1">M1G-methyltransferase</fullName>
    </alternativeName>
    <alternativeName>
        <fullName evidence="1">tRNA [GM37] methyltransferase</fullName>
    </alternativeName>
</protein>
<evidence type="ECO:0000255" key="1">
    <source>
        <dbReference type="HAMAP-Rule" id="MF_00605"/>
    </source>
</evidence>
<organism>
    <name type="scientific">Zymomonas mobilis subsp. mobilis (strain ATCC 31821 / ZM4 / CP4)</name>
    <dbReference type="NCBI Taxonomy" id="264203"/>
    <lineage>
        <taxon>Bacteria</taxon>
        <taxon>Pseudomonadati</taxon>
        <taxon>Pseudomonadota</taxon>
        <taxon>Alphaproteobacteria</taxon>
        <taxon>Sphingomonadales</taxon>
        <taxon>Zymomonadaceae</taxon>
        <taxon>Zymomonas</taxon>
    </lineage>
</organism>
<keyword id="KW-0963">Cytoplasm</keyword>
<keyword id="KW-0489">Methyltransferase</keyword>
<keyword id="KW-1185">Reference proteome</keyword>
<keyword id="KW-0949">S-adenosyl-L-methionine</keyword>
<keyword id="KW-0808">Transferase</keyword>
<keyword id="KW-0819">tRNA processing</keyword>